<sequence length="205" mass="22849">MTKLSKRQLDILRFIKAEVKSKGYPPSVREIGEAVGLASSSTVHGHLARLETKGLIRRDPTKPRAIEILDEEVDIPQSQVVNVPVIGKVTAGSPITAVENIEEYFPLPDRMVPPDEHVFMLEIMGDSMIDAGILDKDYVIVKQQNTANNGEIVVAMTEDDEATVKRFYKEDTHIRLQPENPTMEPIILQNVSILGKVIGVFRTVH</sequence>
<proteinExistence type="evidence at protein level"/>
<organism>
    <name type="scientific">Bacillus subtilis (strain 168)</name>
    <dbReference type="NCBI Taxonomy" id="224308"/>
    <lineage>
        <taxon>Bacteria</taxon>
        <taxon>Bacillati</taxon>
        <taxon>Bacillota</taxon>
        <taxon>Bacilli</taxon>
        <taxon>Bacillales</taxon>
        <taxon>Bacillaceae</taxon>
        <taxon>Bacillus</taxon>
    </lineage>
</organism>
<comment type="function">
    <text evidence="3 4 7">Represses dinA, dinB, dinC, recA genes and itself by binding to the 14 bp palindromic sequence 5'-CGAACNNNNGTTCG-3'; some genes have a tandem consensus sequence and their binding is cooperative (PubMed:1657879, PubMed:8969214, PubMed:9555905). In the presence of single-stranded DNA, RecA interacts with LexA causing an autocatalytic cleavage which disrupts the DNA-binding part of LexA, leading to derepression of the SOS regulon and eventually DNA repair; autocleavage is maximal at pH 11 in the absence of RecA and ssDNA (PubMed:8969214).</text>
</comment>
<comment type="catalytic activity">
    <reaction evidence="1 3">
        <text>Hydrolysis of Ala-|-Gly bond in repressor LexA.</text>
        <dbReference type="EC" id="3.4.21.88"/>
    </reaction>
</comment>
<comment type="subunit">
    <text evidence="1 7 9">Homodimer.</text>
</comment>
<comment type="developmental stage">
    <text evidence="2">Expressed during the entire cell cycle with at least a threefold increase when cells develop competence.</text>
</comment>
<comment type="induction">
    <text evidence="2">By mitomycin, requires an intact dinR gene (PubMed:1657879). An SOS-independent induction of dinR occurs during competence, does not require an intact dinR gene (PubMed:1657879).</text>
</comment>
<comment type="PTM">
    <text evidence="3">Following treatment with mitomycin C protein levels begin to decrease after a 5-min lag and do not return to their original levels for at least 90 minutes.</text>
</comment>
<comment type="disruption phenotype">
    <text evidence="2">100-fold decrease in homologous recombination efficiency.</text>
</comment>
<comment type="similarity">
    <text evidence="1">Belongs to the peptidase S24 family.</text>
</comment>
<accession>P31080</accession>
<name>LEXA_BACSU</name>
<protein>
    <recommendedName>
        <fullName evidence="1 6">LexA repressor</fullName>
        <ecNumber evidence="1 3">3.4.21.88</ecNumber>
    </recommendedName>
    <alternativeName>
        <fullName evidence="5">SOS regulatory protein DinR</fullName>
    </alternativeName>
</protein>
<feature type="chain" id="PRO_0000170010" description="LexA repressor">
    <location>
        <begin position="1"/>
        <end position="205"/>
    </location>
</feature>
<feature type="DNA-binding region" description="H-T-H motif" evidence="1">
    <location>
        <begin position="28"/>
        <end position="48"/>
    </location>
</feature>
<feature type="active site" description="For autocatalytic cleavage activity" evidence="1 8">
    <location>
        <position position="127"/>
    </location>
</feature>
<feature type="active site" description="For autocatalytic cleavage activity" evidence="1 8">
    <location>
        <position position="165"/>
    </location>
</feature>
<feature type="site" description="Cleavage; by autolysis" evidence="3">
    <location>
        <begin position="91"/>
        <end position="92"/>
    </location>
</feature>
<keyword id="KW-0068">Autocatalytic cleavage</keyword>
<keyword id="KW-0227">DNA damage</keyword>
<keyword id="KW-0234">DNA repair</keyword>
<keyword id="KW-0235">DNA replication</keyword>
<keyword id="KW-0238">DNA-binding</keyword>
<keyword id="KW-0378">Hydrolase</keyword>
<keyword id="KW-1185">Reference proteome</keyword>
<keyword id="KW-0678">Repressor</keyword>
<keyword id="KW-0742">SOS response</keyword>
<keyword id="KW-0804">Transcription</keyword>
<keyword id="KW-0805">Transcription regulation</keyword>
<reference key="1">
    <citation type="journal article" date="1991" name="J. Bacteriol.">
        <title>Identification of dinR, a DNA damage-inducible regulator gene of Bacillus subtilis.</title>
        <authorList>
            <person name="Raymond-Denise A."/>
            <person name="Guillen N."/>
        </authorList>
    </citation>
    <scope>NUCLEOTIDE SEQUENCE [GENOMIC DNA]</scope>
    <scope>FUNCTION</scope>
    <scope>INDUCTION BY DNA DAMAGE AND COMPETENCE</scope>
    <scope>DISRUPTION PHENOTYPE</scope>
    <source>
        <strain>168</strain>
    </source>
</reference>
<reference key="2">
    <citation type="journal article" date="1996" name="J. Biol. Chem.">
        <title>The Bacillus subtilis dinR gene codes for the analogue of Escherichia coli LexA. Purification and characterization of the DinR protein.</title>
        <authorList>
            <person name="Miller M.C."/>
            <person name="Resnick J.B."/>
            <person name="Smith B.T."/>
            <person name="Lovett C.M. Jr."/>
        </authorList>
    </citation>
    <scope>NUCLEOTIDE SEQUENCE [GENOMIC DNA]</scope>
    <scope>FUNCTION</scope>
    <scope>PROTEOLYTIC CLEAVAGE</scope>
    <scope>DNA-BINDING</scope>
    <source>
        <strain>168 / YB886 / BG214</strain>
    </source>
</reference>
<reference key="3">
    <citation type="journal article" date="1997" name="Nature">
        <title>The complete genome sequence of the Gram-positive bacterium Bacillus subtilis.</title>
        <authorList>
            <person name="Kunst F."/>
            <person name="Ogasawara N."/>
            <person name="Moszer I."/>
            <person name="Albertini A.M."/>
            <person name="Alloni G."/>
            <person name="Azevedo V."/>
            <person name="Bertero M.G."/>
            <person name="Bessieres P."/>
            <person name="Bolotin A."/>
            <person name="Borchert S."/>
            <person name="Borriss R."/>
            <person name="Boursier L."/>
            <person name="Brans A."/>
            <person name="Braun M."/>
            <person name="Brignell S.C."/>
            <person name="Bron S."/>
            <person name="Brouillet S."/>
            <person name="Bruschi C.V."/>
            <person name="Caldwell B."/>
            <person name="Capuano V."/>
            <person name="Carter N.M."/>
            <person name="Choi S.-K."/>
            <person name="Codani J.-J."/>
            <person name="Connerton I.F."/>
            <person name="Cummings N.J."/>
            <person name="Daniel R.A."/>
            <person name="Denizot F."/>
            <person name="Devine K.M."/>
            <person name="Duesterhoeft A."/>
            <person name="Ehrlich S.D."/>
            <person name="Emmerson P.T."/>
            <person name="Entian K.-D."/>
            <person name="Errington J."/>
            <person name="Fabret C."/>
            <person name="Ferrari E."/>
            <person name="Foulger D."/>
            <person name="Fritz C."/>
            <person name="Fujita M."/>
            <person name="Fujita Y."/>
            <person name="Fuma S."/>
            <person name="Galizzi A."/>
            <person name="Galleron N."/>
            <person name="Ghim S.-Y."/>
            <person name="Glaser P."/>
            <person name="Goffeau A."/>
            <person name="Golightly E.J."/>
            <person name="Grandi G."/>
            <person name="Guiseppi G."/>
            <person name="Guy B.J."/>
            <person name="Haga K."/>
            <person name="Haiech J."/>
            <person name="Harwood C.R."/>
            <person name="Henaut A."/>
            <person name="Hilbert H."/>
            <person name="Holsappel S."/>
            <person name="Hosono S."/>
            <person name="Hullo M.-F."/>
            <person name="Itaya M."/>
            <person name="Jones L.-M."/>
            <person name="Joris B."/>
            <person name="Karamata D."/>
            <person name="Kasahara Y."/>
            <person name="Klaerr-Blanchard M."/>
            <person name="Klein C."/>
            <person name="Kobayashi Y."/>
            <person name="Koetter P."/>
            <person name="Koningstein G."/>
            <person name="Krogh S."/>
            <person name="Kumano M."/>
            <person name="Kurita K."/>
            <person name="Lapidus A."/>
            <person name="Lardinois S."/>
            <person name="Lauber J."/>
            <person name="Lazarevic V."/>
            <person name="Lee S.-M."/>
            <person name="Levine A."/>
            <person name="Liu H."/>
            <person name="Masuda S."/>
            <person name="Mauel C."/>
            <person name="Medigue C."/>
            <person name="Medina N."/>
            <person name="Mellado R.P."/>
            <person name="Mizuno M."/>
            <person name="Moestl D."/>
            <person name="Nakai S."/>
            <person name="Noback M."/>
            <person name="Noone D."/>
            <person name="O'Reilly M."/>
            <person name="Ogawa K."/>
            <person name="Ogiwara A."/>
            <person name="Oudega B."/>
            <person name="Park S.-H."/>
            <person name="Parro V."/>
            <person name="Pohl T.M."/>
            <person name="Portetelle D."/>
            <person name="Porwollik S."/>
            <person name="Prescott A.M."/>
            <person name="Presecan E."/>
            <person name="Pujic P."/>
            <person name="Purnelle B."/>
            <person name="Rapoport G."/>
            <person name="Rey M."/>
            <person name="Reynolds S."/>
            <person name="Rieger M."/>
            <person name="Rivolta C."/>
            <person name="Rocha E."/>
            <person name="Roche B."/>
            <person name="Rose M."/>
            <person name="Sadaie Y."/>
            <person name="Sato T."/>
            <person name="Scanlan E."/>
            <person name="Schleich S."/>
            <person name="Schroeter R."/>
            <person name="Scoffone F."/>
            <person name="Sekiguchi J."/>
            <person name="Sekowska A."/>
            <person name="Seror S.J."/>
            <person name="Serror P."/>
            <person name="Shin B.-S."/>
            <person name="Soldo B."/>
            <person name="Sorokin A."/>
            <person name="Tacconi E."/>
            <person name="Takagi T."/>
            <person name="Takahashi H."/>
            <person name="Takemaru K."/>
            <person name="Takeuchi M."/>
            <person name="Tamakoshi A."/>
            <person name="Tanaka T."/>
            <person name="Terpstra P."/>
            <person name="Tognoni A."/>
            <person name="Tosato V."/>
            <person name="Uchiyama S."/>
            <person name="Vandenbol M."/>
            <person name="Vannier F."/>
            <person name="Vassarotti A."/>
            <person name="Viari A."/>
            <person name="Wambutt R."/>
            <person name="Wedler E."/>
            <person name="Wedler H."/>
            <person name="Weitzenegger T."/>
            <person name="Winters P."/>
            <person name="Wipat A."/>
            <person name="Yamamoto H."/>
            <person name="Yamane K."/>
            <person name="Yasumoto K."/>
            <person name="Yata K."/>
            <person name="Yoshida K."/>
            <person name="Yoshikawa H.-F."/>
            <person name="Zumstein E."/>
            <person name="Yoshikawa H."/>
            <person name="Danchin A."/>
        </authorList>
    </citation>
    <scope>NUCLEOTIDE SEQUENCE [LARGE SCALE GENOMIC DNA]</scope>
    <source>
        <strain>168</strain>
    </source>
</reference>
<reference key="4">
    <citation type="journal article" date="1998" name="J. Bacteriol.">
        <title>The Bacillus subtilis DinR binding site: redefinition of the consensus sequence.</title>
        <authorList>
            <person name="Winterling K.W."/>
            <person name="Chafin D."/>
            <person name="Hayes J.J."/>
            <person name="Sun J."/>
            <person name="Levine A.S."/>
            <person name="Yasbin R.E."/>
            <person name="Woodgate R."/>
        </authorList>
    </citation>
    <scope>DNA-BINDING SPECIFICITY</scope>
    <scope>POSSIBLE DIMERIZATION</scope>
    <source>
        <strain>YB886A</strain>
    </source>
</reference>
<gene>
    <name evidence="1" type="primary">lexA</name>
    <name evidence="5" type="synonym">dinR</name>
    <name type="ordered locus">BSU17850</name>
</gene>
<dbReference type="EC" id="3.4.21.88" evidence="1 3"/>
<dbReference type="EMBL" id="M64684">
    <property type="protein sequence ID" value="AAA22573.1"/>
    <property type="molecule type" value="Genomic_DNA"/>
</dbReference>
<dbReference type="EMBL" id="AL009126">
    <property type="protein sequence ID" value="CAB13669.1"/>
    <property type="molecule type" value="Genomic_DNA"/>
</dbReference>
<dbReference type="PIR" id="A41315">
    <property type="entry name" value="A41315"/>
</dbReference>
<dbReference type="RefSeq" id="NP_389668.1">
    <property type="nucleotide sequence ID" value="NC_000964.3"/>
</dbReference>
<dbReference type="RefSeq" id="WP_003238209.1">
    <property type="nucleotide sequence ID" value="NZ_OZ025638.1"/>
</dbReference>
<dbReference type="SMR" id="P31080"/>
<dbReference type="FunCoup" id="P31080">
    <property type="interactions" value="393"/>
</dbReference>
<dbReference type="STRING" id="224308.BSU17850"/>
<dbReference type="MEROPS" id="S24.001"/>
<dbReference type="PaxDb" id="224308-BSU17850"/>
<dbReference type="EnsemblBacteria" id="CAB13669">
    <property type="protein sequence ID" value="CAB13669"/>
    <property type="gene ID" value="BSU_17850"/>
</dbReference>
<dbReference type="GeneID" id="86873700"/>
<dbReference type="GeneID" id="939564"/>
<dbReference type="KEGG" id="bsu:BSU17850"/>
<dbReference type="PATRIC" id="fig|224308.179.peg.1946"/>
<dbReference type="eggNOG" id="COG1974">
    <property type="taxonomic scope" value="Bacteria"/>
</dbReference>
<dbReference type="InParanoid" id="P31080"/>
<dbReference type="OrthoDB" id="9802364at2"/>
<dbReference type="PhylomeDB" id="P31080"/>
<dbReference type="BioCyc" id="BSUB:BSU17850-MONOMER"/>
<dbReference type="PRO" id="PR:P31080"/>
<dbReference type="Proteomes" id="UP000001570">
    <property type="component" value="Chromosome"/>
</dbReference>
<dbReference type="CollecTF" id="EXPREG_00000a00"/>
<dbReference type="GO" id="GO:0032993">
    <property type="term" value="C:protein-DNA complex"/>
    <property type="evidence" value="ECO:0000318"/>
    <property type="project" value="GO_Central"/>
</dbReference>
<dbReference type="GO" id="GO:0001217">
    <property type="term" value="F:DNA-binding transcription repressor activity"/>
    <property type="evidence" value="ECO:0000318"/>
    <property type="project" value="GO_Central"/>
</dbReference>
<dbReference type="GO" id="GO:0043565">
    <property type="term" value="F:sequence-specific DNA binding"/>
    <property type="evidence" value="ECO:0000318"/>
    <property type="project" value="GO_Central"/>
</dbReference>
<dbReference type="GO" id="GO:0004252">
    <property type="term" value="F:serine-type endopeptidase activity"/>
    <property type="evidence" value="ECO:0007669"/>
    <property type="project" value="UniProtKB-UniRule"/>
</dbReference>
<dbReference type="GO" id="GO:0006281">
    <property type="term" value="P:DNA repair"/>
    <property type="evidence" value="ECO:0007669"/>
    <property type="project" value="UniProtKB-UniRule"/>
</dbReference>
<dbReference type="GO" id="GO:0006260">
    <property type="term" value="P:DNA replication"/>
    <property type="evidence" value="ECO:0007669"/>
    <property type="project" value="UniProtKB-UniRule"/>
</dbReference>
<dbReference type="GO" id="GO:0045892">
    <property type="term" value="P:negative regulation of DNA-templated transcription"/>
    <property type="evidence" value="ECO:0000318"/>
    <property type="project" value="GO_Central"/>
</dbReference>
<dbReference type="GO" id="GO:0006508">
    <property type="term" value="P:proteolysis"/>
    <property type="evidence" value="ECO:0007669"/>
    <property type="project" value="InterPro"/>
</dbReference>
<dbReference type="GO" id="GO:0009432">
    <property type="term" value="P:SOS response"/>
    <property type="evidence" value="ECO:0000318"/>
    <property type="project" value="GO_Central"/>
</dbReference>
<dbReference type="CDD" id="cd00090">
    <property type="entry name" value="HTH_ARSR"/>
    <property type="match status" value="1"/>
</dbReference>
<dbReference type="CDD" id="cd06529">
    <property type="entry name" value="S24_LexA-like"/>
    <property type="match status" value="1"/>
</dbReference>
<dbReference type="FunFam" id="1.10.10.10:FF:000009">
    <property type="entry name" value="LexA repressor"/>
    <property type="match status" value="1"/>
</dbReference>
<dbReference type="FunFam" id="2.10.109.10:FF:000001">
    <property type="entry name" value="LexA repressor"/>
    <property type="match status" value="1"/>
</dbReference>
<dbReference type="Gene3D" id="2.10.109.10">
    <property type="entry name" value="Umud Fragment, subunit A"/>
    <property type="match status" value="1"/>
</dbReference>
<dbReference type="Gene3D" id="1.10.10.10">
    <property type="entry name" value="Winged helix-like DNA-binding domain superfamily/Winged helix DNA-binding domain"/>
    <property type="match status" value="1"/>
</dbReference>
<dbReference type="HAMAP" id="MF_00015">
    <property type="entry name" value="LexA"/>
    <property type="match status" value="1"/>
</dbReference>
<dbReference type="InterPro" id="IPR011991">
    <property type="entry name" value="ArsR-like_HTH"/>
</dbReference>
<dbReference type="InterPro" id="IPR006200">
    <property type="entry name" value="LexA"/>
</dbReference>
<dbReference type="InterPro" id="IPR039418">
    <property type="entry name" value="LexA-like"/>
</dbReference>
<dbReference type="InterPro" id="IPR036286">
    <property type="entry name" value="LexA/Signal_pep-like_sf"/>
</dbReference>
<dbReference type="InterPro" id="IPR006199">
    <property type="entry name" value="LexA_DNA-bd_dom"/>
</dbReference>
<dbReference type="InterPro" id="IPR050077">
    <property type="entry name" value="LexA_repressor"/>
</dbReference>
<dbReference type="InterPro" id="IPR006197">
    <property type="entry name" value="Peptidase_S24_LexA"/>
</dbReference>
<dbReference type="InterPro" id="IPR015927">
    <property type="entry name" value="Peptidase_S24_S26A/B/C"/>
</dbReference>
<dbReference type="InterPro" id="IPR036388">
    <property type="entry name" value="WH-like_DNA-bd_sf"/>
</dbReference>
<dbReference type="InterPro" id="IPR036390">
    <property type="entry name" value="WH_DNA-bd_sf"/>
</dbReference>
<dbReference type="NCBIfam" id="TIGR00498">
    <property type="entry name" value="lexA"/>
    <property type="match status" value="1"/>
</dbReference>
<dbReference type="PANTHER" id="PTHR33516">
    <property type="entry name" value="LEXA REPRESSOR"/>
    <property type="match status" value="1"/>
</dbReference>
<dbReference type="PANTHER" id="PTHR33516:SF2">
    <property type="entry name" value="LEXA REPRESSOR-RELATED"/>
    <property type="match status" value="1"/>
</dbReference>
<dbReference type="Pfam" id="PF01726">
    <property type="entry name" value="LexA_DNA_bind"/>
    <property type="match status" value="1"/>
</dbReference>
<dbReference type="Pfam" id="PF00717">
    <property type="entry name" value="Peptidase_S24"/>
    <property type="match status" value="1"/>
</dbReference>
<dbReference type="PRINTS" id="PR00726">
    <property type="entry name" value="LEXASERPTASE"/>
</dbReference>
<dbReference type="SUPFAM" id="SSF51306">
    <property type="entry name" value="LexA/Signal peptidase"/>
    <property type="match status" value="1"/>
</dbReference>
<dbReference type="SUPFAM" id="SSF46785">
    <property type="entry name" value="Winged helix' DNA-binding domain"/>
    <property type="match status" value="1"/>
</dbReference>
<evidence type="ECO:0000255" key="1">
    <source>
        <dbReference type="HAMAP-Rule" id="MF_00015"/>
    </source>
</evidence>
<evidence type="ECO:0000269" key="2">
    <source>
    </source>
</evidence>
<evidence type="ECO:0000269" key="3">
    <source>
    </source>
</evidence>
<evidence type="ECO:0000269" key="4">
    <source>
    </source>
</evidence>
<evidence type="ECO:0000303" key="5">
    <source>
    </source>
</evidence>
<evidence type="ECO:0000303" key="6">
    <source>
    </source>
</evidence>
<evidence type="ECO:0000305" key="7">
    <source>
    </source>
</evidence>
<evidence type="ECO:0000305" key="8">
    <source>
    </source>
</evidence>
<evidence type="ECO:0000305" key="9">
    <source>
    </source>
</evidence>